<proteinExistence type="inferred from homology"/>
<comment type="subunit">
    <text evidence="1">Component of the DREAM complex.</text>
</comment>
<comment type="similarity">
    <text evidence="2">Belongs to the lin-52 family.</text>
</comment>
<dbReference type="EMBL" id="CAAE01015019">
    <property type="protein sequence ID" value="CAG10649.1"/>
    <property type="molecule type" value="Genomic_DNA"/>
</dbReference>
<dbReference type="SMR" id="Q4RLT3"/>
<dbReference type="FunCoup" id="Q4RLT3">
    <property type="interactions" value="357"/>
</dbReference>
<dbReference type="STRING" id="99883.ENSTNIP00000020568"/>
<dbReference type="Ensembl" id="ENSTNIT00000020800.1">
    <property type="protein sequence ID" value="ENSTNIP00000020568.1"/>
    <property type="gene ID" value="ENSTNIG00000017427.1"/>
</dbReference>
<dbReference type="KEGG" id="tng:GSTEN00032351G001"/>
<dbReference type="GeneTree" id="ENSGT00390000008402"/>
<dbReference type="HOGENOM" id="CLU_143062_1_0_1"/>
<dbReference type="InParanoid" id="Q4RLT3"/>
<dbReference type="OMA" id="PDLICVE"/>
<dbReference type="OrthoDB" id="5834362at2759"/>
<dbReference type="TreeFam" id="TF320091"/>
<dbReference type="Proteomes" id="UP000007303">
    <property type="component" value="Unassembled WGS sequence"/>
</dbReference>
<dbReference type="GO" id="GO:0070176">
    <property type="term" value="C:DRM complex"/>
    <property type="evidence" value="ECO:0007669"/>
    <property type="project" value="InterPro"/>
</dbReference>
<dbReference type="GO" id="GO:0006355">
    <property type="term" value="P:regulation of DNA-templated transcription"/>
    <property type="evidence" value="ECO:0007669"/>
    <property type="project" value="InterPro"/>
</dbReference>
<dbReference type="InterPro" id="IPR018737">
    <property type="entry name" value="DREAM_LIN52"/>
</dbReference>
<dbReference type="PANTHER" id="PTHR31489">
    <property type="entry name" value="LIN52 FAMILY MEMBER"/>
    <property type="match status" value="1"/>
</dbReference>
<dbReference type="PANTHER" id="PTHR31489:SF2">
    <property type="entry name" value="PROTEIN LIN-52 HOMOLOG"/>
    <property type="match status" value="1"/>
</dbReference>
<dbReference type="Pfam" id="PF10044">
    <property type="entry name" value="LIN52"/>
    <property type="match status" value="1"/>
</dbReference>
<feature type="chain" id="PRO_0000273499" description="Protein lin-52 homolog">
    <location>
        <begin position="1"/>
        <end position="112"/>
    </location>
</feature>
<accession>Q4RLT3</accession>
<keyword id="KW-1185">Reference proteome</keyword>
<reference key="1">
    <citation type="journal article" date="2004" name="Nature">
        <title>Genome duplication in the teleost fish Tetraodon nigroviridis reveals the early vertebrate proto-karyotype.</title>
        <authorList>
            <person name="Jaillon O."/>
            <person name="Aury J.-M."/>
            <person name="Brunet F."/>
            <person name="Petit J.-L."/>
            <person name="Stange-Thomann N."/>
            <person name="Mauceli E."/>
            <person name="Bouneau L."/>
            <person name="Fischer C."/>
            <person name="Ozouf-Costaz C."/>
            <person name="Bernot A."/>
            <person name="Nicaud S."/>
            <person name="Jaffe D."/>
            <person name="Fisher S."/>
            <person name="Lutfalla G."/>
            <person name="Dossat C."/>
            <person name="Segurens B."/>
            <person name="Dasilva C."/>
            <person name="Salanoubat M."/>
            <person name="Levy M."/>
            <person name="Boudet N."/>
            <person name="Castellano S."/>
            <person name="Anthouard V."/>
            <person name="Jubin C."/>
            <person name="Castelli V."/>
            <person name="Katinka M."/>
            <person name="Vacherie B."/>
            <person name="Biemont C."/>
            <person name="Skalli Z."/>
            <person name="Cattolico L."/>
            <person name="Poulain J."/>
            <person name="De Berardinis V."/>
            <person name="Cruaud C."/>
            <person name="Duprat S."/>
            <person name="Brottier P."/>
            <person name="Coutanceau J.-P."/>
            <person name="Gouzy J."/>
            <person name="Parra G."/>
            <person name="Lardier G."/>
            <person name="Chapple C."/>
            <person name="McKernan K.J."/>
            <person name="McEwan P."/>
            <person name="Bosak S."/>
            <person name="Kellis M."/>
            <person name="Volff J.-N."/>
            <person name="Guigo R."/>
            <person name="Zody M.C."/>
            <person name="Mesirov J."/>
            <person name="Lindblad-Toh K."/>
            <person name="Birren B."/>
            <person name="Nusbaum C."/>
            <person name="Kahn D."/>
            <person name="Robinson-Rechavi M."/>
            <person name="Laudet V."/>
            <person name="Schachter V."/>
            <person name="Quetier F."/>
            <person name="Saurin W."/>
            <person name="Scarpelli C."/>
            <person name="Wincker P."/>
            <person name="Lander E.S."/>
            <person name="Weissenbach J."/>
            <person name="Roest Crollius H."/>
        </authorList>
    </citation>
    <scope>NUCLEOTIDE SEQUENCE [LARGE SCALE GENOMIC DNA]</scope>
</reference>
<gene>
    <name type="primary">lin52</name>
    <name type="ORF">GSTENG00032351001</name>
</gene>
<protein>
    <recommendedName>
        <fullName>Protein lin-52 homolog</fullName>
    </recommendedName>
</protein>
<evidence type="ECO:0000250" key="1"/>
<evidence type="ECO:0000305" key="2"/>
<organism>
    <name type="scientific">Tetraodon nigroviridis</name>
    <name type="common">Spotted green pufferfish</name>
    <name type="synonym">Chelonodon nigroviridis</name>
    <dbReference type="NCBI Taxonomy" id="99883"/>
    <lineage>
        <taxon>Eukaryota</taxon>
        <taxon>Metazoa</taxon>
        <taxon>Chordata</taxon>
        <taxon>Craniata</taxon>
        <taxon>Vertebrata</taxon>
        <taxon>Euteleostomi</taxon>
        <taxon>Actinopterygii</taxon>
        <taxon>Neopterygii</taxon>
        <taxon>Teleostei</taxon>
        <taxon>Neoteleostei</taxon>
        <taxon>Acanthomorphata</taxon>
        <taxon>Eupercaria</taxon>
        <taxon>Tetraodontiformes</taxon>
        <taxon>Tetradontoidea</taxon>
        <taxon>Tetraodontidae</taxon>
        <taxon>Tetraodon</taxon>
    </lineage>
</organism>
<sequence>MASPNGGDDFESSLLSFEKLDRASPDLWPEQLPGVVEFAASCKNPITDSPPKWMAELESEDYEMLKELGSLTTANLMEKVRGLQNLAYQLGLEESREMTRGKFLNILESFKK</sequence>
<name>LIN52_TETNG</name>